<organism>
    <name type="scientific">Synechococcus elongatus (strain ATCC 33912 / PCC 7942 / FACHB-805)</name>
    <name type="common">Anacystis nidulans R2</name>
    <dbReference type="NCBI Taxonomy" id="1140"/>
    <lineage>
        <taxon>Bacteria</taxon>
        <taxon>Bacillati</taxon>
        <taxon>Cyanobacteriota</taxon>
        <taxon>Cyanophyceae</taxon>
        <taxon>Synechococcales</taxon>
        <taxon>Synechococcaceae</taxon>
        <taxon>Synechococcus</taxon>
    </lineage>
</organism>
<gene>
    <name evidence="1" type="primary">sigA1</name>
    <name type="synonym">rpoD1</name>
    <name type="ordered locus">Synpcc7942_0649</name>
</gene>
<feature type="chain" id="PRO_0000093927" description="RNA polymerase sigma factor SigA1">
    <location>
        <begin position="1"/>
        <end position="399"/>
    </location>
</feature>
<feature type="DNA-binding region" description="H-T-H motif" evidence="1">
    <location>
        <begin position="360"/>
        <end position="379"/>
    </location>
</feature>
<feature type="region of interest" description="Disordered" evidence="2">
    <location>
        <begin position="1"/>
        <end position="73"/>
    </location>
</feature>
<feature type="region of interest" description="Sigma-70 factor domain-2" evidence="1">
    <location>
        <begin position="167"/>
        <end position="237"/>
    </location>
</feature>
<feature type="region of interest" description="Sigma-70 factor domain-3" evidence="1">
    <location>
        <begin position="246"/>
        <end position="321"/>
    </location>
</feature>
<feature type="region of interest" description="Sigma-70 factor domain-4" evidence="1">
    <location>
        <begin position="334"/>
        <end position="387"/>
    </location>
</feature>
<feature type="short sequence motif" description="Interaction with polymerase core subunit RpoC">
    <location>
        <begin position="191"/>
        <end position="194"/>
    </location>
</feature>
<feature type="compositionally biased region" description="Acidic residues" evidence="2">
    <location>
        <begin position="60"/>
        <end position="73"/>
    </location>
</feature>
<protein>
    <recommendedName>
        <fullName evidence="1">RNA polymerase sigma factor SigA1</fullName>
    </recommendedName>
</protein>
<evidence type="ECO:0000255" key="1">
    <source>
        <dbReference type="HAMAP-Rule" id="MF_00963"/>
    </source>
</evidence>
<evidence type="ECO:0000256" key="2">
    <source>
        <dbReference type="SAM" id="MobiDB-lite"/>
    </source>
</evidence>
<evidence type="ECO:0000305" key="3"/>
<name>SIGA1_SYNE7</name>
<comment type="function">
    <text evidence="1">Sigma factors are initiation factors that promote the attachment of RNA polymerase to specific initiation sites and are then released. This sigma factor is the primary sigma factor during exponential growth.</text>
</comment>
<comment type="subunit">
    <text evidence="1">Interacts transiently with the RNA polymerase catalytic core.</text>
</comment>
<comment type="subcellular location">
    <subcellularLocation>
        <location evidence="1">Cytoplasm</location>
    </subcellularLocation>
</comment>
<comment type="similarity">
    <text evidence="1">Belongs to the sigma-70 factor family. RpoD/SigA subfamily.</text>
</comment>
<comment type="sequence caution" evidence="3">
    <conflict type="erroneous initiation">
        <sequence resource="EMBL-CDS" id="BAA01749"/>
    </conflict>
</comment>
<dbReference type="EMBL" id="CP000100">
    <property type="protein sequence ID" value="ABB56681.1"/>
    <property type="molecule type" value="Genomic_DNA"/>
</dbReference>
<dbReference type="EMBL" id="D10973">
    <property type="protein sequence ID" value="BAA01749.1"/>
    <property type="status" value="ALT_INIT"/>
    <property type="molecule type" value="Genomic_DNA"/>
</dbReference>
<dbReference type="EMBL" id="S44852">
    <property type="protein sequence ID" value="AAC60414.1"/>
    <property type="molecule type" value="Genomic_DNA"/>
</dbReference>
<dbReference type="PIR" id="JN0331">
    <property type="entry name" value="JN0331"/>
</dbReference>
<dbReference type="PIR" id="S24172">
    <property type="entry name" value="S24172"/>
</dbReference>
<dbReference type="SMR" id="P38023"/>
<dbReference type="STRING" id="1140.Synpcc7942_0649"/>
<dbReference type="PaxDb" id="1140-Synpcc7942_0649"/>
<dbReference type="KEGG" id="syf:Synpcc7942_0649"/>
<dbReference type="eggNOG" id="COG0568">
    <property type="taxonomic scope" value="Bacteria"/>
</dbReference>
<dbReference type="HOGENOM" id="CLU_014793_3_4_3"/>
<dbReference type="BioCyc" id="SYNEL:SYNPCC7942_0649-MONOMER"/>
<dbReference type="Proteomes" id="UP000889800">
    <property type="component" value="Chromosome"/>
</dbReference>
<dbReference type="GO" id="GO:0005737">
    <property type="term" value="C:cytoplasm"/>
    <property type="evidence" value="ECO:0007669"/>
    <property type="project" value="UniProtKB-SubCell"/>
</dbReference>
<dbReference type="GO" id="GO:0003677">
    <property type="term" value="F:DNA binding"/>
    <property type="evidence" value="ECO:0007669"/>
    <property type="project" value="UniProtKB-UniRule"/>
</dbReference>
<dbReference type="GO" id="GO:0016987">
    <property type="term" value="F:sigma factor activity"/>
    <property type="evidence" value="ECO:0007669"/>
    <property type="project" value="UniProtKB-UniRule"/>
</dbReference>
<dbReference type="GO" id="GO:0006352">
    <property type="term" value="P:DNA-templated transcription initiation"/>
    <property type="evidence" value="ECO:0007669"/>
    <property type="project" value="UniProtKB-UniRule"/>
</dbReference>
<dbReference type="CDD" id="cd06171">
    <property type="entry name" value="Sigma70_r4"/>
    <property type="match status" value="1"/>
</dbReference>
<dbReference type="FunFam" id="1.10.601.10:FF:000001">
    <property type="entry name" value="RNA polymerase sigma factor SigA"/>
    <property type="match status" value="1"/>
</dbReference>
<dbReference type="Gene3D" id="1.10.601.10">
    <property type="entry name" value="RNA Polymerase Primary Sigma Factor"/>
    <property type="match status" value="1"/>
</dbReference>
<dbReference type="Gene3D" id="1.10.10.10">
    <property type="entry name" value="Winged helix-like DNA-binding domain superfamily/Winged helix DNA-binding domain"/>
    <property type="match status" value="2"/>
</dbReference>
<dbReference type="HAMAP" id="MF_00963">
    <property type="entry name" value="Sigma70_RpoD_SigA"/>
    <property type="match status" value="1"/>
</dbReference>
<dbReference type="InterPro" id="IPR014284">
    <property type="entry name" value="RNA_pol_sigma-70_dom"/>
</dbReference>
<dbReference type="InterPro" id="IPR000943">
    <property type="entry name" value="RNA_pol_sigma70"/>
</dbReference>
<dbReference type="InterPro" id="IPR009042">
    <property type="entry name" value="RNA_pol_sigma70_r1_2"/>
</dbReference>
<dbReference type="InterPro" id="IPR007627">
    <property type="entry name" value="RNA_pol_sigma70_r2"/>
</dbReference>
<dbReference type="InterPro" id="IPR007624">
    <property type="entry name" value="RNA_pol_sigma70_r3"/>
</dbReference>
<dbReference type="InterPro" id="IPR007630">
    <property type="entry name" value="RNA_pol_sigma70_r4"/>
</dbReference>
<dbReference type="InterPro" id="IPR013325">
    <property type="entry name" value="RNA_pol_sigma_r2"/>
</dbReference>
<dbReference type="InterPro" id="IPR013324">
    <property type="entry name" value="RNA_pol_sigma_r3/r4-like"/>
</dbReference>
<dbReference type="InterPro" id="IPR017848">
    <property type="entry name" value="RNA_pol_sigma_RpoD/SigA_cyanob"/>
</dbReference>
<dbReference type="InterPro" id="IPR012760">
    <property type="entry name" value="RNA_pol_sigma_RpoD_C"/>
</dbReference>
<dbReference type="InterPro" id="IPR050239">
    <property type="entry name" value="Sigma-70_RNA_pol_init_factors"/>
</dbReference>
<dbReference type="InterPro" id="IPR028630">
    <property type="entry name" value="Sigma70_RpoD"/>
</dbReference>
<dbReference type="InterPro" id="IPR036388">
    <property type="entry name" value="WH-like_DNA-bd_sf"/>
</dbReference>
<dbReference type="NCBIfam" id="NF005643">
    <property type="entry name" value="PRK07406.1"/>
    <property type="match status" value="1"/>
</dbReference>
<dbReference type="NCBIfam" id="TIGR02393">
    <property type="entry name" value="RpoD_Cterm"/>
    <property type="match status" value="1"/>
</dbReference>
<dbReference type="NCBIfam" id="TIGR02997">
    <property type="entry name" value="Sig70-cyanoRpoD"/>
    <property type="match status" value="1"/>
</dbReference>
<dbReference type="NCBIfam" id="TIGR02937">
    <property type="entry name" value="sigma70-ECF"/>
    <property type="match status" value="1"/>
</dbReference>
<dbReference type="PANTHER" id="PTHR30603">
    <property type="entry name" value="RNA POLYMERASE SIGMA FACTOR RPO"/>
    <property type="match status" value="1"/>
</dbReference>
<dbReference type="PANTHER" id="PTHR30603:SF62">
    <property type="entry name" value="RNA POLYMERASE SIGMA FACTOR SIGA"/>
    <property type="match status" value="1"/>
</dbReference>
<dbReference type="Pfam" id="PF00140">
    <property type="entry name" value="Sigma70_r1_2"/>
    <property type="match status" value="1"/>
</dbReference>
<dbReference type="Pfam" id="PF04542">
    <property type="entry name" value="Sigma70_r2"/>
    <property type="match status" value="1"/>
</dbReference>
<dbReference type="Pfam" id="PF04539">
    <property type="entry name" value="Sigma70_r3"/>
    <property type="match status" value="1"/>
</dbReference>
<dbReference type="Pfam" id="PF04545">
    <property type="entry name" value="Sigma70_r4"/>
    <property type="match status" value="1"/>
</dbReference>
<dbReference type="PRINTS" id="PR00046">
    <property type="entry name" value="SIGMA70FCT"/>
</dbReference>
<dbReference type="SUPFAM" id="SSF88946">
    <property type="entry name" value="Sigma2 domain of RNA polymerase sigma factors"/>
    <property type="match status" value="1"/>
</dbReference>
<dbReference type="SUPFAM" id="SSF88659">
    <property type="entry name" value="Sigma3 and sigma4 domains of RNA polymerase sigma factors"/>
    <property type="match status" value="2"/>
</dbReference>
<dbReference type="PROSITE" id="PS00715">
    <property type="entry name" value="SIGMA70_1"/>
    <property type="match status" value="1"/>
</dbReference>
<dbReference type="PROSITE" id="PS00716">
    <property type="entry name" value="SIGMA70_2"/>
    <property type="match status" value="1"/>
</dbReference>
<accession>P38023</accession>
<accession>Q31QI8</accession>
<reference key="1">
    <citation type="submission" date="2005-08" db="EMBL/GenBank/DDBJ databases">
        <title>Complete sequence of chromosome 1 of Synechococcus elongatus PCC 7942.</title>
        <authorList>
            <consortium name="US DOE Joint Genome Institute"/>
            <person name="Copeland A."/>
            <person name="Lucas S."/>
            <person name="Lapidus A."/>
            <person name="Barry K."/>
            <person name="Detter J.C."/>
            <person name="Glavina T."/>
            <person name="Hammon N."/>
            <person name="Israni S."/>
            <person name="Pitluck S."/>
            <person name="Schmutz J."/>
            <person name="Larimer F."/>
            <person name="Land M."/>
            <person name="Kyrpides N."/>
            <person name="Lykidis A."/>
            <person name="Golden S."/>
            <person name="Richardson P."/>
        </authorList>
    </citation>
    <scope>NUCLEOTIDE SEQUENCE [LARGE SCALE GENOMIC DNA]</scope>
    <source>
        <strain>ATCC 33912 / PCC 7942 / FACHB-805</strain>
    </source>
</reference>
<reference key="2">
    <citation type="journal article" date="1992" name="Biochim. Biophys. Acta">
        <title>The complete nucleotide sequence of the gene (rpoD1) encoding the principal sigma factor of the RNA polymerase from the cyanobacterium Synechococcus sp. strain PCC7942.</title>
        <authorList>
            <person name="Tanaka K."/>
            <person name="Masuda S."/>
            <person name="Takahashi H."/>
        </authorList>
    </citation>
    <scope>NUCLEOTIDE SEQUENCE [GENOMIC DNA] OF 3-399</scope>
</reference>
<reference key="3">
    <citation type="journal article" date="1992" name="Biosci. Biotechnol. Biochem.">
        <title>Multiple rpoD-related genes of cyanobacteria.</title>
        <authorList>
            <person name="Tanaka K."/>
            <person name="Masuda S."/>
            <person name="Takahashi H."/>
        </authorList>
    </citation>
    <scope>NUCLEOTIDE SEQUENCE [GENOMIC DNA] OF 190-237</scope>
</reference>
<sequence length="399" mass="45702">MTQLISIDKEQEEAGMTQATELLDPALKPAETKAKRSSRKKATTAVVEPATTIAPTADVDAIDDEDSVGEDEDAAAKAKAKVRKTYTEDSIRLYLQEIGRIRLLRADEEIELARQIADLLALERIRDELLEQLDRLPSDAEWAAAVDSPLDEFRRRLFRGRRAKDKMVQSNLRLVVSIAKKYMNRGLSFQDLIQEGSLGLIRAAEKFDHEKGYKFSTYATWWIRQAITRAIADQSRTIRLPVHLYETISRIKKTTKLLSQEMGRKPTEEEIATRMEMTIEKLRFIAKSAQLPISLETPIGKEEDSRLGDFIEADGETPEDEVAKNLLREDLEGVLSTLSPRERDVLRLRYGLDDGRMKTLEEIGQLFNVTRERIRQIEAKALRKLRHPNRNSILKEYIR</sequence>
<proteinExistence type="inferred from homology"/>
<keyword id="KW-0963">Cytoplasm</keyword>
<keyword id="KW-0238">DNA-binding</keyword>
<keyword id="KW-1185">Reference proteome</keyword>
<keyword id="KW-0731">Sigma factor</keyword>
<keyword id="KW-0804">Transcription</keyword>
<keyword id="KW-0805">Transcription regulation</keyword>